<evidence type="ECO:0000250" key="1">
    <source>
        <dbReference type="UniProtKB" id="P19171"/>
    </source>
</evidence>
<evidence type="ECO:0000250" key="2">
    <source>
        <dbReference type="UniProtKB" id="P29022"/>
    </source>
</evidence>
<evidence type="ECO:0000250" key="3">
    <source>
        <dbReference type="UniProtKB" id="Q9FRV1"/>
    </source>
</evidence>
<evidence type="ECO:0000255" key="4"/>
<evidence type="ECO:0000269" key="5">
    <source>
    </source>
</evidence>
<evidence type="ECO:0000305" key="6"/>
<evidence type="ECO:0007829" key="7">
    <source>
        <dbReference type="PDB" id="3CQL"/>
    </source>
</evidence>
<keyword id="KW-0002">3D-structure</keyword>
<keyword id="KW-0119">Carbohydrate metabolism</keyword>
<keyword id="KW-0146">Chitin degradation</keyword>
<keyword id="KW-0147">Chitin-binding</keyword>
<keyword id="KW-0903">Direct protein sequencing</keyword>
<keyword id="KW-1015">Disulfide bond</keyword>
<keyword id="KW-0326">Glycosidase</keyword>
<keyword id="KW-0378">Hydrolase</keyword>
<keyword id="KW-0611">Plant defense</keyword>
<keyword id="KW-0624">Polysaccharide degradation</keyword>
<keyword id="KW-0926">Vacuole</keyword>
<comment type="function">
    <text evidence="5">Defense against chitin-containing fungal pathogens. Shows activity on chitin, tetra-N-acetylglucosamine and chitosan.</text>
</comment>
<comment type="catalytic activity">
    <reaction evidence="5">
        <text>Random endo-hydrolysis of N-acetyl-beta-D-glucosaminide (1-&gt;4)-beta-linkages in chitin and chitodextrins.</text>
        <dbReference type="EC" id="3.2.1.14"/>
    </reaction>
</comment>
<comment type="subcellular location">
    <subcellularLocation>
        <location evidence="1">Vacuole</location>
    </subcellularLocation>
    <text evidence="1">Vacuolar and protoplast.</text>
</comment>
<comment type="mass spectrometry" mass="26534.0" method="Electrospray" evidence="5"/>
<comment type="similarity">
    <text evidence="4">Belongs to the glycosyl hydrolase 19 family. Chitinase class I subfamily.</text>
</comment>
<accession>P85084</accession>
<organism>
    <name type="scientific">Carica papaya</name>
    <name type="common">Papaya</name>
    <dbReference type="NCBI Taxonomy" id="3649"/>
    <lineage>
        <taxon>Eukaryota</taxon>
        <taxon>Viridiplantae</taxon>
        <taxon>Streptophyta</taxon>
        <taxon>Embryophyta</taxon>
        <taxon>Tracheophyta</taxon>
        <taxon>Spermatophyta</taxon>
        <taxon>Magnoliopsida</taxon>
        <taxon>eudicotyledons</taxon>
        <taxon>Gunneridae</taxon>
        <taxon>Pentapetalae</taxon>
        <taxon>rosids</taxon>
        <taxon>malvids</taxon>
        <taxon>Brassicales</taxon>
        <taxon>Caricaceae</taxon>
        <taxon>Carica</taxon>
    </lineage>
</organism>
<feature type="chain" id="PRO_0000285971" description="Endochitinase">
    <location>
        <begin position="1"/>
        <end position="243"/>
    </location>
</feature>
<feature type="active site" description="Proton donor" evidence="2">
    <location>
        <position position="67"/>
    </location>
</feature>
<feature type="disulfide bond" evidence="3">
    <location>
        <begin position="23"/>
        <end position="85"/>
    </location>
</feature>
<feature type="disulfide bond" evidence="3">
    <location>
        <begin position="97"/>
        <end position="105"/>
    </location>
</feature>
<feature type="disulfide bond" evidence="3">
    <location>
        <begin position="223"/>
        <end position="236"/>
    </location>
</feature>
<feature type="helix" evidence="7">
    <location>
        <begin position="2"/>
        <end position="4"/>
    </location>
</feature>
<feature type="helix" evidence="7">
    <location>
        <begin position="8"/>
        <end position="14"/>
    </location>
</feature>
<feature type="turn" evidence="7">
    <location>
        <begin position="15"/>
        <end position="19"/>
    </location>
</feature>
<feature type="turn" evidence="7">
    <location>
        <begin position="24"/>
        <end position="28"/>
    </location>
</feature>
<feature type="helix" evidence="7">
    <location>
        <begin position="31"/>
        <end position="39"/>
    </location>
</feature>
<feature type="turn" evidence="7">
    <location>
        <begin position="42"/>
        <end position="45"/>
    </location>
</feature>
<feature type="helix" evidence="7">
    <location>
        <begin position="50"/>
        <end position="67"/>
    </location>
</feature>
<feature type="helix" evidence="7">
    <location>
        <begin position="79"/>
        <end position="81"/>
    </location>
</feature>
<feature type="strand" evidence="7">
    <location>
        <begin position="101"/>
        <end position="103"/>
    </location>
</feature>
<feature type="turn" evidence="7">
    <location>
        <begin position="115"/>
        <end position="118"/>
    </location>
</feature>
<feature type="helix" evidence="7">
    <location>
        <begin position="122"/>
        <end position="132"/>
    </location>
</feature>
<feature type="turn" evidence="7">
    <location>
        <begin position="136"/>
        <end position="138"/>
    </location>
</feature>
<feature type="helix" evidence="7">
    <location>
        <begin position="140"/>
        <end position="144"/>
    </location>
</feature>
<feature type="helix" evidence="7">
    <location>
        <begin position="147"/>
        <end position="159"/>
    </location>
</feature>
<feature type="helix" evidence="7">
    <location>
        <begin position="168"/>
        <end position="172"/>
    </location>
</feature>
<feature type="helix" evidence="7">
    <location>
        <begin position="180"/>
        <end position="185"/>
    </location>
</feature>
<feature type="helix" evidence="7">
    <location>
        <begin position="191"/>
        <end position="203"/>
    </location>
</feature>
<feature type="strand" evidence="7">
    <location>
        <begin position="204"/>
        <end position="207"/>
    </location>
</feature>
<feature type="helix" evidence="7">
    <location>
        <begin position="210"/>
        <end position="226"/>
    </location>
</feature>
<protein>
    <recommendedName>
        <fullName>Endochitinase</fullName>
        <ecNumber>3.2.1.14</ecNumber>
    </recommendedName>
</protein>
<dbReference type="EC" id="3.2.1.14"/>
<dbReference type="PDB" id="3CQL">
    <property type="method" value="X-ray"/>
    <property type="resolution" value="1.50 A"/>
    <property type="chains" value="A/B=1-243"/>
</dbReference>
<dbReference type="PDBsum" id="3CQL"/>
<dbReference type="SMR" id="P85084"/>
<dbReference type="CAZy" id="GH19">
    <property type="family name" value="Glycoside Hydrolase Family 19"/>
</dbReference>
<dbReference type="BRENDA" id="3.2.1.14">
    <property type="organism ID" value="1191"/>
</dbReference>
<dbReference type="EvolutionaryTrace" id="P85084"/>
<dbReference type="GO" id="GO:0005773">
    <property type="term" value="C:vacuole"/>
    <property type="evidence" value="ECO:0007669"/>
    <property type="project" value="UniProtKB-SubCell"/>
</dbReference>
<dbReference type="GO" id="GO:0008061">
    <property type="term" value="F:chitin binding"/>
    <property type="evidence" value="ECO:0007669"/>
    <property type="project" value="UniProtKB-KW"/>
</dbReference>
<dbReference type="GO" id="GO:0008843">
    <property type="term" value="F:endochitinase activity"/>
    <property type="evidence" value="ECO:0007669"/>
    <property type="project" value="UniProtKB-EC"/>
</dbReference>
<dbReference type="GO" id="GO:0016998">
    <property type="term" value="P:cell wall macromolecule catabolic process"/>
    <property type="evidence" value="ECO:0007669"/>
    <property type="project" value="InterPro"/>
</dbReference>
<dbReference type="GO" id="GO:0006032">
    <property type="term" value="P:chitin catabolic process"/>
    <property type="evidence" value="ECO:0007669"/>
    <property type="project" value="UniProtKB-KW"/>
</dbReference>
<dbReference type="GO" id="GO:0050832">
    <property type="term" value="P:defense response to fungus"/>
    <property type="evidence" value="ECO:0007669"/>
    <property type="project" value="TreeGrafter"/>
</dbReference>
<dbReference type="GO" id="GO:0000272">
    <property type="term" value="P:polysaccharide catabolic process"/>
    <property type="evidence" value="ECO:0007669"/>
    <property type="project" value="UniProtKB-KW"/>
</dbReference>
<dbReference type="CDD" id="cd00325">
    <property type="entry name" value="chitinase_GH19"/>
    <property type="match status" value="1"/>
</dbReference>
<dbReference type="FunFam" id="3.30.20.10:FF:000001">
    <property type="entry name" value="Endochitinase (Chitinase)"/>
    <property type="match status" value="1"/>
</dbReference>
<dbReference type="Gene3D" id="1.10.530.10">
    <property type="match status" value="1"/>
</dbReference>
<dbReference type="Gene3D" id="3.30.20.10">
    <property type="entry name" value="Endochitinase, domain 2"/>
    <property type="match status" value="1"/>
</dbReference>
<dbReference type="InterPro" id="IPR016283">
    <property type="entry name" value="Glyco_hydro_19"/>
</dbReference>
<dbReference type="InterPro" id="IPR000726">
    <property type="entry name" value="Glyco_hydro_19_cat"/>
</dbReference>
<dbReference type="InterPro" id="IPR023346">
    <property type="entry name" value="Lysozyme-like_dom_sf"/>
</dbReference>
<dbReference type="PANTHER" id="PTHR22595:SF79">
    <property type="entry name" value="CHITINASE 12"/>
    <property type="match status" value="1"/>
</dbReference>
<dbReference type="PANTHER" id="PTHR22595">
    <property type="entry name" value="CHITINASE-RELATED"/>
    <property type="match status" value="1"/>
</dbReference>
<dbReference type="Pfam" id="PF00182">
    <property type="entry name" value="Glyco_hydro_19"/>
    <property type="match status" value="1"/>
</dbReference>
<dbReference type="PIRSF" id="PIRSF001060">
    <property type="entry name" value="Endochitinase"/>
    <property type="match status" value="1"/>
</dbReference>
<dbReference type="SUPFAM" id="SSF53955">
    <property type="entry name" value="Lysozyme-like"/>
    <property type="match status" value="1"/>
</dbReference>
<dbReference type="PROSITE" id="PS00773">
    <property type="entry name" value="CHITINASE_19_1"/>
    <property type="match status" value="1"/>
</dbReference>
<dbReference type="PROSITE" id="PS00774">
    <property type="entry name" value="CHITINASE_19_2"/>
    <property type="match status" value="1"/>
</dbReference>
<name>CHIT_CARPA</name>
<sequence length="243" mass="26541">GIEKIISRSMFDQMLKHRNNPACPAKGFYTYDAFLAAAKSFPSFGTTGSTDVRKRELAAFLGQTSHETTGGWPSAPDGPYAWGYCFLKERNPSSNYCAPSPRYPCAPGKSYYGRGPLQLSWNYNYGPCGEALRVNLLGNPDLVATDRVLSFKTALWFWMTPQAPKPSCHDVLTGRWQPSAADTAAGRLPGYGVLTNLLNGGLECGKGPNPQVADRLGFFRRYCGLLGVGTGNNLDCYNQRPFG</sequence>
<reference evidence="6" key="1">
    <citation type="journal article" date="2006" name="Cell. Mol. Life Sci.">
        <title>Structural characterization of two papaya chitinases, a family GH19 of glycosyl hydrolases.</title>
        <authorList>
            <person name="Huet J."/>
            <person name="Wyckmans J."/>
            <person name="Wintjens R."/>
            <person name="Boussard P."/>
            <person name="Raussens V."/>
            <person name="Vandenbussche G."/>
            <person name="Ruysschaert J.M."/>
            <person name="Azarkan M."/>
            <person name="Looze Y."/>
        </authorList>
    </citation>
    <scope>PROTEIN SEQUENCE</scope>
    <scope>FUNCTION</scope>
    <scope>CATALYTIC ACTIVITY</scope>
    <scope>MASS SPECTROMETRY</scope>
    <source>
        <tissue evidence="5">Latex</tissue>
    </source>
</reference>
<proteinExistence type="evidence at protein level"/>